<sequence length="115" mass="13089">MSRYTGPRLKIMRALGVDLPGLGRKSMQERNQPPGQHGARKVAARKSEFGLQLMEKQKLRYNYGVTERQLRRVVLDAKRQKGVTGGKIVELLERRLDNLVFRAGFAPTTRLRANS</sequence>
<reference key="1">
    <citation type="journal article" date="2006" name="Nat. Biotechnol.">
        <title>Complete genome of the mutualistic, N2-fixing grass endophyte Azoarcus sp. strain BH72.</title>
        <authorList>
            <person name="Krause A."/>
            <person name="Ramakumar A."/>
            <person name="Bartels D."/>
            <person name="Battistoni F."/>
            <person name="Bekel T."/>
            <person name="Boch J."/>
            <person name="Boehm M."/>
            <person name="Friedrich F."/>
            <person name="Hurek T."/>
            <person name="Krause L."/>
            <person name="Linke B."/>
            <person name="McHardy A.C."/>
            <person name="Sarkar A."/>
            <person name="Schneiker S."/>
            <person name="Syed A.A."/>
            <person name="Thauer R."/>
            <person name="Vorhoelter F.-J."/>
            <person name="Weidner S."/>
            <person name="Puehler A."/>
            <person name="Reinhold-Hurek B."/>
            <person name="Kaiser O."/>
            <person name="Goesmann A."/>
        </authorList>
    </citation>
    <scope>NUCLEOTIDE SEQUENCE [LARGE SCALE GENOMIC DNA]</scope>
    <source>
        <strain>BH72</strain>
    </source>
</reference>
<feature type="chain" id="PRO_0000293241" description="Ribosomal protein uS4-like">
    <location>
        <begin position="1"/>
        <end position="115"/>
    </location>
</feature>
<keyword id="KW-1185">Reference proteome</keyword>
<evidence type="ECO:0000305" key="1"/>
<organism>
    <name type="scientific">Azoarcus sp. (strain BH72)</name>
    <dbReference type="NCBI Taxonomy" id="418699"/>
    <lineage>
        <taxon>Bacteria</taxon>
        <taxon>Pseudomonadati</taxon>
        <taxon>Pseudomonadota</taxon>
        <taxon>Betaproteobacteria</taxon>
        <taxon>Rhodocyclales</taxon>
        <taxon>Zoogloeaceae</taxon>
        <taxon>Azoarcus</taxon>
    </lineage>
</organism>
<comment type="miscellaneous">
    <text evidence="1">A C-terminally tuncated form of ribosomal protein uS4, this is probably not functional.</text>
</comment>
<comment type="similarity">
    <text evidence="1">Belongs to the universal ribosomal protein uS4 family.</text>
</comment>
<accession>A1K833</accession>
<protein>
    <recommendedName>
        <fullName>Ribosomal protein uS4-like</fullName>
    </recommendedName>
</protein>
<gene>
    <name type="ordered locus">azo2371</name>
</gene>
<name>RS4L_AZOSB</name>
<proteinExistence type="inferred from homology"/>
<dbReference type="EMBL" id="AM406670">
    <property type="protein sequence ID" value="CAL94988.1"/>
    <property type="molecule type" value="Genomic_DNA"/>
</dbReference>
<dbReference type="RefSeq" id="WP_011766102.1">
    <property type="nucleotide sequence ID" value="NC_008702.1"/>
</dbReference>
<dbReference type="SMR" id="A1K833"/>
<dbReference type="STRING" id="62928.azo2371"/>
<dbReference type="KEGG" id="azo:azo2371"/>
<dbReference type="eggNOG" id="COG0522">
    <property type="taxonomic scope" value="Bacteria"/>
</dbReference>
<dbReference type="HOGENOM" id="CLU_092403_2_1_4"/>
<dbReference type="Proteomes" id="UP000002588">
    <property type="component" value="Chromosome"/>
</dbReference>
<dbReference type="GO" id="GO:0019843">
    <property type="term" value="F:rRNA binding"/>
    <property type="evidence" value="ECO:0007669"/>
    <property type="project" value="InterPro"/>
</dbReference>
<dbReference type="Gene3D" id="1.10.1050.10">
    <property type="entry name" value="Ribosomal Protein S4 Delta 41, Chain A, domain 1"/>
    <property type="match status" value="1"/>
</dbReference>
<dbReference type="InterPro" id="IPR001912">
    <property type="entry name" value="Ribosomal_uS4_N"/>
</dbReference>
<dbReference type="NCBIfam" id="NF003717">
    <property type="entry name" value="PRK05327.1"/>
    <property type="match status" value="1"/>
</dbReference>
<dbReference type="Pfam" id="PF00163">
    <property type="entry name" value="Ribosomal_S4"/>
    <property type="match status" value="1"/>
</dbReference>
<dbReference type="SMART" id="SM01390">
    <property type="entry name" value="Ribosomal_S4"/>
    <property type="match status" value="1"/>
</dbReference>
<dbReference type="SUPFAM" id="SSF55174">
    <property type="entry name" value="Alpha-L RNA-binding motif"/>
    <property type="match status" value="1"/>
</dbReference>